<gene>
    <name evidence="1" type="primary">nef</name>
</gene>
<comment type="function">
    <text evidence="1">Factor of infectivity and pathogenicity, required for optimal virus replication. Alters numerous pathways of T-lymphocyte function and down-regulates immunity surface molecules in order to evade host defense and increase viral infectivity. Alters the functionality of other immunity cells, like dendritic cells, monocytes/macrophages and NK cells.</text>
</comment>
<comment type="function">
    <text evidence="1">In infected CD4(+) T-lymphocytes, down-regulates the surface MHC-I, mature MHC-II, CD4, CD28, CCR5 and CXCR4 molecules. Mediates internalization and degradation of host CD4 through the interaction of with the cytoplasmic tail of CD4, the recruitment of AP-2 (clathrin adapter protein complex 2), internalization through clathrin coated pits, and subsequent transport to endosomes and lysosomes for degradation. Diverts host MHC-I molecules to the trans-Golgi network-associated endosomal compartments by an endocytic pathway to finally target them for degradation. MHC-I down-regulation may involve AP-1 (clathrin adapter protein complex 1) or possibly Src family kinase-ZAP70/Syk-PI3K cascade recruited by PACS2. In consequence infected cells are masked for immune recognition by cytotoxic T-lymphocytes. Decreasing the number of immune receptors also prevents reinfection by more HIV particles (superinfection). Down-regulates host SERINC3 and SERINC5 thereby excluding these proteins from the viral particles. Virion infectivity is drastically higher when SERINC3 or SERINC5 are excluded from the viral envelope, because these host antiviral proteins impair the membrane fusion event necessary for subsequent virion penetration.</text>
</comment>
<comment type="function">
    <text evidence="1">Bypasses host T-cell signaling by inducing a transcriptional program nearly identical to that of anti-CD3 cell activation. Interaction with TCR-zeta chain up-regulates the Fas ligand (FasL). Increasing surface FasL molecules and decreasing surface MHC-I molecules on infected CD4(+) cells send attacking cytotoxic CD8+ T-lymphocytes into apoptosis.</text>
</comment>
<comment type="function">
    <text evidence="1">Plays a role in optimizing the host cell environment for viral replication without causing cell death by apoptosis. Protects the infected cells from apoptosis in order to keep them alive until the next virus generation is ready to strike. Inhibits the Fas and TNFR-mediated death signals by blocking MAP3K5/ASK1. Decreases the half-life of TP53, protecting the infected cell against p53-mediated apoptosis. Inhibits the apoptotic signals regulated by the Bcl-2 family proteins through the formation of a Nef/PI3-kinase/PAK2 complex that leads to activation of PAK2 and induces phosphorylation of host BAD.</text>
</comment>
<comment type="function">
    <text evidence="1">Extracellular Nef protein targets CD4(+) T-lymphocytes for apoptosis by interacting with CXCR4 surface receptors.</text>
</comment>
<comment type="subunit">
    <text evidence="1">Monomer; cytosolic form. Homodimer; membrane bound form. Interacts with Nef associated p21-activated kinase (PAK2); this interaction activates PAK2. Associates with the Nef-MHC-I-AP1 complex; this complex is required for MHC-I internalization. Interacts (via C-terminus) with host PI3-kinase. Interacts with host PACS1; this interaction seems to be weak. Interacts with host PACS2. Interacts with host LCK and MAPK3; these interactions inhibit the kinase activity of the latter. Interacts with host ATP6V1H; this interaction may play a role in CD4 endocytosis. Associates with the CD4-Nef-AP2 complex; this complex is required for CD4 internalization. Interacts with host AP2 subunit alpha and AP2 subunit sigma2. Interacts with TCR-zeta chain; this interaction up-regulates the Fas ligand (FasL) surface expression. Interacts with host HCK, LYN, and SRC; these interactions activate the Src family kinases. Interacts with MAP3K5; this interaction inhibits the Fas and TNFR-mediated death signals. Interacts with beta-COP and PTE1. Interacts with human RACK1; this increases Nef phosphorylation by PKC. Interacts with TP53; this interaction decreases the half-life of TP53, protecting the infected cell against p53-mediated apoptosis.</text>
</comment>
<comment type="subcellular location">
    <subcellularLocation>
        <location evidence="1">Host cell membrane</location>
        <topology evidence="1">Lipid-anchor</topology>
        <orientation evidence="1">Cytoplasmic side</orientation>
    </subcellularLocation>
    <subcellularLocation>
        <location evidence="1">Virion</location>
    </subcellularLocation>
    <subcellularLocation>
        <location evidence="1">Secreted</location>
    </subcellularLocation>
    <subcellularLocation>
        <location evidence="1">Host Golgi apparatus membrane</location>
    </subcellularLocation>
    <text evidence="1">TGN localization requires PACS1. Associates with the inner plasma membrane through its N-terminal domain. Nef stimulates its own export via the release of exosomes. Incorporated in virions at a rate of about 10 molecules per virion, where it is cleaved.</text>
</comment>
<comment type="induction">
    <text evidence="1">Expressed early in the viral replication cycle.</text>
</comment>
<comment type="domain">
    <text evidence="1">The N-terminal domain is composed of the N-myristoyl glycine and of a cluster of positively charged amino acids. It is required for inner plasma membrane targeting of Nef and virion incorporation, and thereby for infectivity. This domain is also involved in binding to TP53.</text>
</comment>
<comment type="domain">
    <text evidence="1">The SH3-binding domain constituted of PxxP motifs mediates binding to several Src family proteins thereby regulating their tyrosine kinase activity. The same motifs also mediates the association with MAPK3, PI3-kinase and TCR-zeta.</text>
</comment>
<comment type="domain">
    <text evidence="1">The dileucine internalization motif and a diacidic motif seem to be required for binding to AP-2.</text>
</comment>
<comment type="domain">
    <text evidence="1">The acidic region binds to the sorting protein PACS-2, which targets Nef to the paranuclear region, enabling the PxxP motif to direct assembly of an SFK/ZAP-70/PI3K complex that accelerates endocytosis of cell-surface MHC-I.</text>
</comment>
<comment type="PTM">
    <text evidence="1">The virion-associated Nef proteins are cleaved by the viral protease to release the soluble C-terminal core protein. Nef is probably cleaved concomitantly with viral structural proteins on maturation of virus particles.</text>
</comment>
<comment type="PTM">
    <text evidence="1">Myristoylated.</text>
</comment>
<comment type="PTM">
    <text evidence="1">Phosphorylated on serine residues, probably by host PKCdelta and theta.</text>
</comment>
<comment type="miscellaneous">
    <text evidence="1">HIV-1 lineages are divided in three main groups, M (for Major), O (for Outlier), and N (for New, or Non-M, Non-O). The vast majority of strains found worldwide belong to the group M. Group O seems to be endemic to and largely confined to Cameroon and neighboring countries in West Central Africa, where these viruses represent a small minority of HIV-1 strains. The group N is represented by a limited number of isolates from Cameroonian persons. The group M is further subdivided in 9 clades or subtypes (A to D, F to H, J and K).</text>
</comment>
<comment type="similarity">
    <text evidence="1">Belongs to the lentivirus primate group Nef protein family.</text>
</comment>
<evidence type="ECO:0000255" key="1">
    <source>
        <dbReference type="HAMAP-Rule" id="MF_04078"/>
    </source>
</evidence>
<evidence type="ECO:0000256" key="2">
    <source>
        <dbReference type="SAM" id="MobiDB-lite"/>
    </source>
</evidence>
<keyword id="KW-0014">AIDS</keyword>
<keyword id="KW-0053">Apoptosis</keyword>
<keyword id="KW-0244">Early protein</keyword>
<keyword id="KW-1032">Host cell membrane</keyword>
<keyword id="KW-1040">Host Golgi apparatus</keyword>
<keyword id="KW-1043">Host membrane</keyword>
<keyword id="KW-0945">Host-virus interaction</keyword>
<keyword id="KW-1080">Inhibition of host adaptive immune response by virus</keyword>
<keyword id="KW-1083">Inhibition of host autophagy by virus</keyword>
<keyword id="KW-1115">Inhibition of host MHC class I molecule presentation by virus</keyword>
<keyword id="KW-1116">Inhibition of host MHC class II molecule presentation by virus</keyword>
<keyword id="KW-0449">Lipoprotein</keyword>
<keyword id="KW-0472">Membrane</keyword>
<keyword id="KW-0519">Myristate</keyword>
<keyword id="KW-0597">Phosphoprotein</keyword>
<keyword id="KW-0964">Secreted</keyword>
<keyword id="KW-0729">SH3-binding</keyword>
<keyword id="KW-0899">Viral immunoevasion</keyword>
<keyword id="KW-0946">Virion</keyword>
<keyword id="KW-0843">Virulence</keyword>
<accession>P19546</accession>
<dbReference type="EMBL" id="M65024">
    <property type="protein sequence ID" value="AAA45073.1"/>
    <property type="molecule type" value="Genomic_RNA"/>
</dbReference>
<dbReference type="SMR" id="P19546"/>
<dbReference type="GO" id="GO:0005576">
    <property type="term" value="C:extracellular region"/>
    <property type="evidence" value="ECO:0007669"/>
    <property type="project" value="UniProtKB-SubCell"/>
</dbReference>
<dbReference type="GO" id="GO:0044178">
    <property type="term" value="C:host cell Golgi membrane"/>
    <property type="evidence" value="ECO:0007669"/>
    <property type="project" value="UniProtKB-SubCell"/>
</dbReference>
<dbReference type="GO" id="GO:0020002">
    <property type="term" value="C:host cell plasma membrane"/>
    <property type="evidence" value="ECO:0007669"/>
    <property type="project" value="UniProtKB-SubCell"/>
</dbReference>
<dbReference type="GO" id="GO:0016020">
    <property type="term" value="C:membrane"/>
    <property type="evidence" value="ECO:0007669"/>
    <property type="project" value="UniProtKB-UniRule"/>
</dbReference>
<dbReference type="GO" id="GO:0044423">
    <property type="term" value="C:virion component"/>
    <property type="evidence" value="ECO:0007669"/>
    <property type="project" value="UniProtKB-UniRule"/>
</dbReference>
<dbReference type="GO" id="GO:0005525">
    <property type="term" value="F:GTP binding"/>
    <property type="evidence" value="ECO:0007669"/>
    <property type="project" value="UniProtKB-UniRule"/>
</dbReference>
<dbReference type="GO" id="GO:0017124">
    <property type="term" value="F:SH3 domain binding"/>
    <property type="evidence" value="ECO:0007669"/>
    <property type="project" value="UniProtKB-UniRule"/>
</dbReference>
<dbReference type="GO" id="GO:0046776">
    <property type="term" value="P:symbiont-mediated suppression of host antigen processing and presentation of peptide antigen via MHC class I"/>
    <property type="evidence" value="ECO:0007669"/>
    <property type="project" value="UniProtKB-UniRule"/>
</dbReference>
<dbReference type="GO" id="GO:0039505">
    <property type="term" value="P:symbiont-mediated suppression of host antigen processing and presentation of peptide antigen via MHC class II"/>
    <property type="evidence" value="ECO:0007669"/>
    <property type="project" value="UniProtKB-UniRule"/>
</dbReference>
<dbReference type="GO" id="GO:0140321">
    <property type="term" value="P:symbiont-mediated suppression of host autophagy"/>
    <property type="evidence" value="ECO:0007669"/>
    <property type="project" value="UniProtKB-KW"/>
</dbReference>
<dbReference type="FunFam" id="3.30.62.10:FF:000001">
    <property type="entry name" value="Protein Nef"/>
    <property type="match status" value="1"/>
</dbReference>
<dbReference type="Gene3D" id="4.10.890.10">
    <property type="entry name" value="HIV 1 nef anchor domain"/>
    <property type="match status" value="1"/>
</dbReference>
<dbReference type="Gene3D" id="3.30.62.10">
    <property type="entry name" value="Nef Regulatory Factor"/>
    <property type="match status" value="1"/>
</dbReference>
<dbReference type="HAMAP" id="MF_04078">
    <property type="entry name" value="NEF_HIV"/>
    <property type="match status" value="1"/>
</dbReference>
<dbReference type="InterPro" id="IPR027480">
    <property type="entry name" value="HIV-1_Nef_anchor_sf"/>
</dbReference>
<dbReference type="InterPro" id="IPR027481">
    <property type="entry name" value="HIV-1_Nef_core_sf"/>
</dbReference>
<dbReference type="InterPro" id="IPR001558">
    <property type="entry name" value="HIV_Nef"/>
</dbReference>
<dbReference type="Pfam" id="PF00469">
    <property type="entry name" value="F-protein"/>
    <property type="match status" value="1"/>
</dbReference>
<dbReference type="SUPFAM" id="SSF55671">
    <property type="entry name" value="Regulatory factor Nef"/>
    <property type="match status" value="1"/>
</dbReference>
<organism>
    <name type="scientific">Human immunodeficiency virus type 1 group M subtype B (isolate SF162)</name>
    <name type="common">HIV-1</name>
    <dbReference type="NCBI Taxonomy" id="11691"/>
    <lineage>
        <taxon>Viruses</taxon>
        <taxon>Riboviria</taxon>
        <taxon>Pararnavirae</taxon>
        <taxon>Artverviricota</taxon>
        <taxon>Revtraviricetes</taxon>
        <taxon>Ortervirales</taxon>
        <taxon>Retroviridae</taxon>
        <taxon>Orthoretrovirinae</taxon>
        <taxon>Lentivirus</taxon>
        <taxon>Human immunodeficiency virus type 1</taxon>
    </lineage>
</organism>
<feature type="initiator methionine" description="Removed; by host" evidence="1">
    <location>
        <position position="1"/>
    </location>
</feature>
<feature type="chain" id="PRO_0000038343" description="Protein Nef" evidence="1">
    <location>
        <begin position="2"/>
        <end position="208"/>
    </location>
</feature>
<feature type="chain" id="PRO_0000038344" description="C-terminal core protein" evidence="1">
    <location>
        <begin position="60"/>
        <end position="208"/>
    </location>
</feature>
<feature type="region of interest" description="Disordered" evidence="2">
    <location>
        <begin position="1"/>
        <end position="33"/>
    </location>
</feature>
<feature type="region of interest" description="Acidic; interacts with host PACS1 and PACS2; stabilizes the interaction of NEF/MHC-I with host AP1M1; necessary for MHC-I internalization" evidence="1">
    <location>
        <begin position="64"/>
        <end position="67"/>
    </location>
</feature>
<feature type="region of interest" description="SH3-binding; interaction with Src family tyrosine kinases" evidence="1">
    <location>
        <begin position="71"/>
        <end position="80"/>
    </location>
</feature>
<feature type="region of interest" description="Mediates dimerization, Nef-PTE1 interaction" evidence="1">
    <location>
        <begin position="110"/>
        <end position="126"/>
    </location>
</feature>
<feature type="region of interest" description="Binding to ATP6V1H" evidence="1">
    <location>
        <begin position="150"/>
        <end position="182"/>
    </location>
</feature>
<feature type="short sequence motif" description="PxxP; stabilizes the interaction of NEF/MHC-I with host AP1M1; necessary for MHC-I internalization" evidence="1">
    <location>
        <begin position="74"/>
        <end position="77"/>
    </location>
</feature>
<feature type="short sequence motif" description="Dileucine internalization motif; necessary for CD4 internalization" evidence="1">
    <location>
        <begin position="166"/>
        <end position="167"/>
    </location>
</feature>
<feature type="short sequence motif" description="Diacidic; necessary for CD4 internalization" evidence="1">
    <location>
        <begin position="176"/>
        <end position="177"/>
    </location>
</feature>
<feature type="compositionally biased region" description="Basic and acidic residues" evidence="2">
    <location>
        <begin position="15"/>
        <end position="24"/>
    </location>
</feature>
<feature type="site" description="Might play a role in AP-1 recruitment to the Nef-MHC-I complex" evidence="1">
    <location>
        <position position="19"/>
    </location>
</feature>
<feature type="site" description="Cleavage; by viral protease" evidence="1">
    <location>
        <begin position="59"/>
        <end position="60"/>
    </location>
</feature>
<feature type="modified residue" description="Phosphoserine; by host" evidence="1">
    <location>
        <position position="6"/>
    </location>
</feature>
<feature type="lipid moiety-binding region" description="N-myristoyl glycine; by host" evidence="1">
    <location>
        <position position="2"/>
    </location>
</feature>
<proteinExistence type="inferred from homology"/>
<sequence>MGGKWSKRMSGWSAVRERMKRAEPAEPAADGVGAVSRDLEKHGAITSSNTAANNADCAWLEAQEDEDVGFPVRPQVPLRPMTYKAALDLSHFLKEKGGLEGLIYSQKRQDILDLWIHHTQGYFPDWQNYTPGPGIRYPLTFGWCFKLVPVDPDYVEEANAGENNSLLHPMSQHGMDDPEKEVLVWRFDSRLAFHHMARELHPEYYKDC</sequence>
<reference key="1">
    <citation type="journal article" date="1990" name="J. Virol.">
        <title>Viral determinants of human immunodeficiency virus type 1 T-cell or macrophage tropism, cytopathogenicity, and CD4 antigen modulation.</title>
        <authorList>
            <person name="Cheng-Mayer C."/>
            <person name="Quiroga M."/>
            <person name="Tung J.W."/>
            <person name="Dina D."/>
            <person name="Levy J.A."/>
        </authorList>
    </citation>
    <scope>NUCLEOTIDE SEQUENCE [GENOMIC RNA]</scope>
</reference>
<organismHost>
    <name type="scientific">Homo sapiens</name>
    <name type="common">Human</name>
    <dbReference type="NCBI Taxonomy" id="9606"/>
</organismHost>
<name>NEF_HV1S1</name>
<protein>
    <recommendedName>
        <fullName evidence="1">Protein Nef</fullName>
    </recommendedName>
    <alternativeName>
        <fullName evidence="1">3'ORF</fullName>
    </alternativeName>
    <alternativeName>
        <fullName evidence="1">Negative factor</fullName>
        <shortName evidence="1">F-protein</shortName>
    </alternativeName>
    <component>
        <recommendedName>
            <fullName evidence="1">C-terminal core protein</fullName>
        </recommendedName>
    </component>
</protein>